<feature type="chain" id="PRO_0000193140" description="Medium/long-chain-fatty-acid--[acyl-carrier-protein] ligase MbtM">
    <location>
        <begin position="1"/>
        <end position="521"/>
    </location>
</feature>
<evidence type="ECO:0000250" key="1">
    <source>
        <dbReference type="UniProtKB" id="A0QUA1"/>
    </source>
</evidence>
<evidence type="ECO:0000305" key="2"/>
<organism>
    <name type="scientific">Mycobacterium bovis (strain ATCC BAA-935 / AF2122/97)</name>
    <dbReference type="NCBI Taxonomy" id="233413"/>
    <lineage>
        <taxon>Bacteria</taxon>
        <taxon>Bacillati</taxon>
        <taxon>Actinomycetota</taxon>
        <taxon>Actinomycetes</taxon>
        <taxon>Mycobacteriales</taxon>
        <taxon>Mycobacteriaceae</taxon>
        <taxon>Mycobacterium</taxon>
        <taxon>Mycobacterium tuberculosis complex</taxon>
    </lineage>
</organism>
<comment type="function">
    <text evidence="1">Activates lipidic moieties required for mycobactin biosynthesis. Converts medium- to long-chain aliphatic fatty acids into acyl adenylate, which is further transferred on to the phosphopantetheine arm of the carrier protein MbtL.</text>
</comment>
<comment type="catalytic activity">
    <reaction evidence="1">
        <text>a long-chain fatty acid + holo-[ACP] + ATP = a long-chain fatty acyl-[ACP] + AMP + diphosphate</text>
        <dbReference type="Rhea" id="RHEA:45588"/>
        <dbReference type="Rhea" id="RHEA-COMP:9685"/>
        <dbReference type="Rhea" id="RHEA-COMP:12682"/>
        <dbReference type="ChEBI" id="CHEBI:30616"/>
        <dbReference type="ChEBI" id="CHEBI:33019"/>
        <dbReference type="ChEBI" id="CHEBI:57560"/>
        <dbReference type="ChEBI" id="CHEBI:64479"/>
        <dbReference type="ChEBI" id="CHEBI:133243"/>
        <dbReference type="ChEBI" id="CHEBI:456215"/>
        <dbReference type="EC" id="6.2.1.20"/>
    </reaction>
</comment>
<comment type="catalytic activity">
    <reaction evidence="1">
        <text>a medium-chain fatty acid + holo-[ACP] + ATP = a medium-chain fatty acyl-[ACP] + AMP + diphosphate</text>
        <dbReference type="Rhea" id="RHEA:50460"/>
        <dbReference type="Rhea" id="RHEA-COMP:9685"/>
        <dbReference type="Rhea" id="RHEA-COMP:12681"/>
        <dbReference type="ChEBI" id="CHEBI:30616"/>
        <dbReference type="ChEBI" id="CHEBI:33019"/>
        <dbReference type="ChEBI" id="CHEBI:59558"/>
        <dbReference type="ChEBI" id="CHEBI:64479"/>
        <dbReference type="ChEBI" id="CHEBI:133242"/>
        <dbReference type="ChEBI" id="CHEBI:456215"/>
        <dbReference type="EC" id="6.2.1.47"/>
    </reaction>
</comment>
<comment type="pathway">
    <text evidence="1">Siderophore biosynthesis; mycobactin biosynthesis.</text>
</comment>
<comment type="similarity">
    <text evidence="2">Belongs to the ATP-dependent AMP-binding enzyme family.</text>
</comment>
<protein>
    <recommendedName>
        <fullName evidence="1">Medium/long-chain-fatty-acid--[acyl-carrier-protein] ligase MbtM</fullName>
        <ecNumber evidence="1">6.2.1.20</ecNumber>
        <ecNumber evidence="1">6.2.1.47</ecNumber>
    </recommendedName>
    <alternativeName>
        <fullName evidence="1">Fatty acyl-[acyl-carrier-protein] synthetase</fullName>
        <shortName evidence="1">Fatty acyl-ACP synthetase</shortName>
    </alternativeName>
    <alternativeName>
        <fullName evidence="1">Mycobactin synthetase protein M</fullName>
    </alternativeName>
</protein>
<keyword id="KW-0067">ATP-binding</keyword>
<keyword id="KW-0436">Ligase</keyword>
<keyword id="KW-0547">Nucleotide-binding</keyword>
<keyword id="KW-1185">Reference proteome</keyword>
<gene>
    <name type="primary">mbtM</name>
    <name type="synonym">fadD33</name>
    <name type="ordered locus">BQ2027_MB1380</name>
</gene>
<name>MBTM_MYCBO</name>
<accession>P0A4X9</accession>
<accession>A0A1R3Y073</accession>
<accession>Q11015</accession>
<accession>X2BHE8</accession>
<proteinExistence type="inferred from homology"/>
<sequence>MSELAAVLTRSMQASAGDLMVLDRETSLWCRHPWPEVHGLAESVAAWLLDHDRPAAVGLVGEPTVELVAAIQGAWLAGAAVSILPGPVRGANDQRWADATLTRFLGIGVRTVLSQGSYLARLRSVDTAGVTIGDLSTAAHTNRSATPVASEGPAVLQGTAGSTGAPRTAILSPGAVLSNLRGLNQRVGTDAATDVGCSWLPLYHDMGLAFVLSAALAGAPLWLAPTTAFTASPFRWLSWLSDSGATMTAAPNFAYNLIGKYARRVSEVDLGALRVTLNGGEPVDCDGLTRFAEAMAPFGFDAGAVLPSYGLAESTCAVTVPVPGIGLLADRVIDGSGAHKHAVLGNPIPGMEVRISCGDQAAGNASREIGEIEIRGASMMAGYLGQQPIDPDDWFATGDLGYLGAGGLVVCGRAKEVISIAGRNIFPTEVELVAAQVRGVREGAVVALGTGDRSTRPGLVVAAEFRGPDEANARAELIQRVASECGIVPSDVVFVSPGSLPRTSSGKLRRLAVRRSLEMAD</sequence>
<dbReference type="EC" id="6.2.1.20" evidence="1"/>
<dbReference type="EC" id="6.2.1.47" evidence="1"/>
<dbReference type="EMBL" id="LT708304">
    <property type="protein sequence ID" value="SIT99983.1"/>
    <property type="molecule type" value="Genomic_DNA"/>
</dbReference>
<dbReference type="RefSeq" id="NP_855034.1">
    <property type="nucleotide sequence ID" value="NC_002945.3"/>
</dbReference>
<dbReference type="RefSeq" id="WP_003406950.1">
    <property type="nucleotide sequence ID" value="NC_002945.4"/>
</dbReference>
<dbReference type="SMR" id="P0A4X9"/>
<dbReference type="GeneID" id="45425323"/>
<dbReference type="KEGG" id="mbo:BQ2027_MB1380"/>
<dbReference type="PATRIC" id="fig|233413.5.peg.1512"/>
<dbReference type="UniPathway" id="UPA00011"/>
<dbReference type="Proteomes" id="UP000001419">
    <property type="component" value="Chromosome"/>
</dbReference>
<dbReference type="GO" id="GO:0005886">
    <property type="term" value="C:plasma membrane"/>
    <property type="evidence" value="ECO:0007669"/>
    <property type="project" value="TreeGrafter"/>
</dbReference>
<dbReference type="GO" id="GO:0070566">
    <property type="term" value="F:adenylyltransferase activity"/>
    <property type="evidence" value="ECO:0007669"/>
    <property type="project" value="TreeGrafter"/>
</dbReference>
<dbReference type="GO" id="GO:0005524">
    <property type="term" value="F:ATP binding"/>
    <property type="evidence" value="ECO:0007669"/>
    <property type="project" value="UniProtKB-KW"/>
</dbReference>
<dbReference type="GO" id="GO:0008922">
    <property type="term" value="F:long-chain fatty acid [acyl-carrier-protein] ligase activity"/>
    <property type="evidence" value="ECO:0007669"/>
    <property type="project" value="UniProtKB-EC"/>
</dbReference>
<dbReference type="GO" id="GO:0006633">
    <property type="term" value="P:fatty acid biosynthetic process"/>
    <property type="evidence" value="ECO:0007669"/>
    <property type="project" value="TreeGrafter"/>
</dbReference>
<dbReference type="CDD" id="cd05931">
    <property type="entry name" value="FAAL"/>
    <property type="match status" value="1"/>
</dbReference>
<dbReference type="FunFam" id="3.40.50.12780:FF:000071">
    <property type="entry name" value="Long-chain-fatty-acid--ACP ligase MbtM"/>
    <property type="match status" value="1"/>
</dbReference>
<dbReference type="Gene3D" id="3.30.300.30">
    <property type="match status" value="1"/>
</dbReference>
<dbReference type="Gene3D" id="3.40.50.12780">
    <property type="entry name" value="N-terminal domain of ligase-like"/>
    <property type="match status" value="1"/>
</dbReference>
<dbReference type="InterPro" id="IPR045851">
    <property type="entry name" value="AMP-bd_C_sf"/>
</dbReference>
<dbReference type="InterPro" id="IPR020845">
    <property type="entry name" value="AMP-binding_CS"/>
</dbReference>
<dbReference type="InterPro" id="IPR000873">
    <property type="entry name" value="AMP-dep_synth/lig_dom"/>
</dbReference>
<dbReference type="InterPro" id="IPR042099">
    <property type="entry name" value="ANL_N_sf"/>
</dbReference>
<dbReference type="InterPro" id="IPR040097">
    <property type="entry name" value="FAAL/FAAC"/>
</dbReference>
<dbReference type="NCBIfam" id="NF004510">
    <property type="entry name" value="PRK05851.1"/>
    <property type="match status" value="1"/>
</dbReference>
<dbReference type="PANTHER" id="PTHR22754:SF32">
    <property type="entry name" value="DISCO-INTERACTING PROTEIN 2"/>
    <property type="match status" value="1"/>
</dbReference>
<dbReference type="PANTHER" id="PTHR22754">
    <property type="entry name" value="DISCO-INTERACTING PROTEIN 2 DIP2 -RELATED"/>
    <property type="match status" value="1"/>
</dbReference>
<dbReference type="Pfam" id="PF00501">
    <property type="entry name" value="AMP-binding"/>
    <property type="match status" value="1"/>
</dbReference>
<dbReference type="SUPFAM" id="SSF56801">
    <property type="entry name" value="Acetyl-CoA synthetase-like"/>
    <property type="match status" value="1"/>
</dbReference>
<dbReference type="PROSITE" id="PS00455">
    <property type="entry name" value="AMP_BINDING"/>
    <property type="match status" value="1"/>
</dbReference>
<reference key="1">
    <citation type="journal article" date="2003" name="Proc. Natl. Acad. Sci. U.S.A.">
        <title>The complete genome sequence of Mycobacterium bovis.</title>
        <authorList>
            <person name="Garnier T."/>
            <person name="Eiglmeier K."/>
            <person name="Camus J.-C."/>
            <person name="Medina N."/>
            <person name="Mansoor H."/>
            <person name="Pryor M."/>
            <person name="Duthoy S."/>
            <person name="Grondin S."/>
            <person name="Lacroix C."/>
            <person name="Monsempe C."/>
            <person name="Simon S."/>
            <person name="Harris B."/>
            <person name="Atkin R."/>
            <person name="Doggett J."/>
            <person name="Mayes R."/>
            <person name="Keating L."/>
            <person name="Wheeler P.R."/>
            <person name="Parkhill J."/>
            <person name="Barrell B.G."/>
            <person name="Cole S.T."/>
            <person name="Gordon S.V."/>
            <person name="Hewinson R.G."/>
        </authorList>
    </citation>
    <scope>NUCLEOTIDE SEQUENCE [LARGE SCALE GENOMIC DNA]</scope>
    <source>
        <strain>ATCC BAA-935 / AF2122/97</strain>
    </source>
</reference>
<reference key="2">
    <citation type="journal article" date="2017" name="Genome Announc.">
        <title>Updated reference genome sequence and annotation of Mycobacterium bovis AF2122/97.</title>
        <authorList>
            <person name="Malone K.M."/>
            <person name="Farrell D."/>
            <person name="Stuber T.P."/>
            <person name="Schubert O.T."/>
            <person name="Aebersold R."/>
            <person name="Robbe-Austerman S."/>
            <person name="Gordon S.V."/>
        </authorList>
    </citation>
    <scope>NUCLEOTIDE SEQUENCE [LARGE SCALE GENOMIC DNA]</scope>
    <scope>GENOME REANNOTATION</scope>
    <source>
        <strain>ATCC BAA-935 / AF2122/97</strain>
    </source>
</reference>